<gene>
    <name evidence="1" type="primary">hemL</name>
    <name type="ordered locus">FTT_0927</name>
</gene>
<protein>
    <recommendedName>
        <fullName evidence="1">Glutamate-1-semialdehyde 2,1-aminomutase</fullName>
        <shortName evidence="1">GSA</shortName>
        <ecNumber evidence="1">5.4.3.8</ecNumber>
    </recommendedName>
    <alternativeName>
        <fullName evidence="1">Glutamate-1-semialdehyde aminotransferase</fullName>
        <shortName evidence="1">GSA-AT</shortName>
    </alternativeName>
</protein>
<reference key="1">
    <citation type="journal article" date="2005" name="Nat. Genet.">
        <title>The complete genome sequence of Francisella tularensis, the causative agent of tularemia.</title>
        <authorList>
            <person name="Larsson P."/>
            <person name="Oyston P.C.F."/>
            <person name="Chain P."/>
            <person name="Chu M.C."/>
            <person name="Duffield M."/>
            <person name="Fuxelius H.-H."/>
            <person name="Garcia E."/>
            <person name="Haelltorp G."/>
            <person name="Johansson D."/>
            <person name="Isherwood K.E."/>
            <person name="Karp P.D."/>
            <person name="Larsson E."/>
            <person name="Liu Y."/>
            <person name="Michell S."/>
            <person name="Prior J."/>
            <person name="Prior R."/>
            <person name="Malfatti S."/>
            <person name="Sjoestedt A."/>
            <person name="Svensson K."/>
            <person name="Thompson N."/>
            <person name="Vergez L."/>
            <person name="Wagg J.K."/>
            <person name="Wren B.W."/>
            <person name="Lindler L.E."/>
            <person name="Andersson S.G.E."/>
            <person name="Forsman M."/>
            <person name="Titball R.W."/>
        </authorList>
    </citation>
    <scope>NUCLEOTIDE SEQUENCE [LARGE SCALE GENOMIC DNA]</scope>
    <source>
        <strain>SCHU S4 / Schu 4</strain>
    </source>
</reference>
<organism>
    <name type="scientific">Francisella tularensis subsp. tularensis (strain SCHU S4 / Schu 4)</name>
    <dbReference type="NCBI Taxonomy" id="177416"/>
    <lineage>
        <taxon>Bacteria</taxon>
        <taxon>Pseudomonadati</taxon>
        <taxon>Pseudomonadota</taxon>
        <taxon>Gammaproteobacteria</taxon>
        <taxon>Thiotrichales</taxon>
        <taxon>Francisellaceae</taxon>
        <taxon>Francisella</taxon>
    </lineage>
</organism>
<name>GSA_FRATT</name>
<feature type="chain" id="PRO_0000243571" description="Glutamate-1-semialdehyde 2,1-aminomutase">
    <location>
        <begin position="1"/>
        <end position="431"/>
    </location>
</feature>
<feature type="modified residue" description="N6-(pyridoxal phosphate)lysine" evidence="1">
    <location>
        <position position="269"/>
    </location>
</feature>
<comment type="catalytic activity">
    <reaction evidence="1">
        <text>(S)-4-amino-5-oxopentanoate = 5-aminolevulinate</text>
        <dbReference type="Rhea" id="RHEA:14265"/>
        <dbReference type="ChEBI" id="CHEBI:57501"/>
        <dbReference type="ChEBI" id="CHEBI:356416"/>
        <dbReference type="EC" id="5.4.3.8"/>
    </reaction>
</comment>
<comment type="cofactor">
    <cofactor evidence="1">
        <name>pyridoxal 5'-phosphate</name>
        <dbReference type="ChEBI" id="CHEBI:597326"/>
    </cofactor>
</comment>
<comment type="pathway">
    <text evidence="1">Porphyrin-containing compound metabolism; protoporphyrin-IX biosynthesis; 5-aminolevulinate from L-glutamyl-tRNA(Glu): step 2/2.</text>
</comment>
<comment type="subunit">
    <text evidence="1">Homodimer.</text>
</comment>
<comment type="subcellular location">
    <subcellularLocation>
        <location evidence="1">Cytoplasm</location>
    </subcellularLocation>
</comment>
<comment type="similarity">
    <text evidence="1">Belongs to the class-III pyridoxal-phosphate-dependent aminotransferase family. HemL subfamily.</text>
</comment>
<accession>Q5NGB9</accession>
<sequence length="431" mass="47186">MENKSNSQILFAEAQQYIPGGVNSPVRAFKSVGQEFPRFIKFAKGAYLYDVDWNKYIDYIGSWGPMILGHCDDDVLEAIQCQVKNGLSYGAPCKQEVDLAKKIIELMPNIEQVRFVNSGTEATMSAIRLARAYTCRNKIIKFEGCYHGHADEFLVAAGSGALSLGQPNSPGVPEDVVKDTLVASFNDMESIQALFEKYKDEIACIIIEPIAGNMNMIFPQDDFLAKLRAICDQNSSLLIFDEVMTGFRVALGGAQSIYNVKPDLTTLGKVIGGGMPVGAFGGRKEIMQKVSPAGPVYQAGTLSGNPIAMTAGIKTLEKISQPGFFDELGAKAQKLVDGLNEAAKAYDFNFHAKCLGGMFGLFFCSDKIAVNTFVDLGKTNLKMFNQFFAYMLDNGVYLAPSAYEAGFISIAHSDEDIEKTIYLAKKFFQEN</sequence>
<evidence type="ECO:0000255" key="1">
    <source>
        <dbReference type="HAMAP-Rule" id="MF_00375"/>
    </source>
</evidence>
<keyword id="KW-0963">Cytoplasm</keyword>
<keyword id="KW-0413">Isomerase</keyword>
<keyword id="KW-0627">Porphyrin biosynthesis</keyword>
<keyword id="KW-0663">Pyridoxal phosphate</keyword>
<keyword id="KW-1185">Reference proteome</keyword>
<dbReference type="EC" id="5.4.3.8" evidence="1"/>
<dbReference type="EMBL" id="AJ749949">
    <property type="protein sequence ID" value="CAG45560.1"/>
    <property type="molecule type" value="Genomic_DNA"/>
</dbReference>
<dbReference type="RefSeq" id="WP_003020957.1">
    <property type="nucleotide sequence ID" value="NC_006570.2"/>
</dbReference>
<dbReference type="RefSeq" id="YP_169923.1">
    <property type="nucleotide sequence ID" value="NC_006570.2"/>
</dbReference>
<dbReference type="SMR" id="Q5NGB9"/>
<dbReference type="IntAct" id="Q5NGB9">
    <property type="interactions" value="4"/>
</dbReference>
<dbReference type="STRING" id="177416.FTT_0927"/>
<dbReference type="DNASU" id="3192422"/>
<dbReference type="EnsemblBacteria" id="CAG45560">
    <property type="protein sequence ID" value="CAG45560"/>
    <property type="gene ID" value="FTT_0927"/>
</dbReference>
<dbReference type="KEGG" id="ftu:FTT_0927"/>
<dbReference type="eggNOG" id="COG0001">
    <property type="taxonomic scope" value="Bacteria"/>
</dbReference>
<dbReference type="OrthoDB" id="9801052at2"/>
<dbReference type="UniPathway" id="UPA00251">
    <property type="reaction ID" value="UER00317"/>
</dbReference>
<dbReference type="Proteomes" id="UP000001174">
    <property type="component" value="Chromosome"/>
</dbReference>
<dbReference type="GO" id="GO:0005737">
    <property type="term" value="C:cytoplasm"/>
    <property type="evidence" value="ECO:0007669"/>
    <property type="project" value="UniProtKB-SubCell"/>
</dbReference>
<dbReference type="GO" id="GO:0042286">
    <property type="term" value="F:glutamate-1-semialdehyde 2,1-aminomutase activity"/>
    <property type="evidence" value="ECO:0007669"/>
    <property type="project" value="UniProtKB-UniRule"/>
</dbReference>
<dbReference type="GO" id="GO:0030170">
    <property type="term" value="F:pyridoxal phosphate binding"/>
    <property type="evidence" value="ECO:0007669"/>
    <property type="project" value="InterPro"/>
</dbReference>
<dbReference type="GO" id="GO:0008483">
    <property type="term" value="F:transaminase activity"/>
    <property type="evidence" value="ECO:0007669"/>
    <property type="project" value="InterPro"/>
</dbReference>
<dbReference type="GO" id="GO:0006782">
    <property type="term" value="P:protoporphyrinogen IX biosynthetic process"/>
    <property type="evidence" value="ECO:0007669"/>
    <property type="project" value="UniProtKB-UniRule"/>
</dbReference>
<dbReference type="CDD" id="cd00610">
    <property type="entry name" value="OAT_like"/>
    <property type="match status" value="1"/>
</dbReference>
<dbReference type="FunFam" id="3.40.640.10:FF:000021">
    <property type="entry name" value="Glutamate-1-semialdehyde 2,1-aminomutase"/>
    <property type="match status" value="1"/>
</dbReference>
<dbReference type="Gene3D" id="3.90.1150.10">
    <property type="entry name" value="Aspartate Aminotransferase, domain 1"/>
    <property type="match status" value="1"/>
</dbReference>
<dbReference type="Gene3D" id="3.40.640.10">
    <property type="entry name" value="Type I PLP-dependent aspartate aminotransferase-like (Major domain)"/>
    <property type="match status" value="1"/>
</dbReference>
<dbReference type="HAMAP" id="MF_00375">
    <property type="entry name" value="HemL_aminotrans_3"/>
    <property type="match status" value="1"/>
</dbReference>
<dbReference type="InterPro" id="IPR004639">
    <property type="entry name" value="4pyrrol_synth_GluAld_NH2Trfase"/>
</dbReference>
<dbReference type="InterPro" id="IPR005814">
    <property type="entry name" value="Aminotrans_3"/>
</dbReference>
<dbReference type="InterPro" id="IPR049704">
    <property type="entry name" value="Aminotrans_3_PPA_site"/>
</dbReference>
<dbReference type="InterPro" id="IPR015424">
    <property type="entry name" value="PyrdxlP-dep_Trfase"/>
</dbReference>
<dbReference type="InterPro" id="IPR015421">
    <property type="entry name" value="PyrdxlP-dep_Trfase_major"/>
</dbReference>
<dbReference type="InterPro" id="IPR015422">
    <property type="entry name" value="PyrdxlP-dep_Trfase_small"/>
</dbReference>
<dbReference type="NCBIfam" id="TIGR00713">
    <property type="entry name" value="hemL"/>
    <property type="match status" value="1"/>
</dbReference>
<dbReference type="NCBIfam" id="NF000818">
    <property type="entry name" value="PRK00062.1"/>
    <property type="match status" value="1"/>
</dbReference>
<dbReference type="PANTHER" id="PTHR43713">
    <property type="entry name" value="GLUTAMATE-1-SEMIALDEHYDE 2,1-AMINOMUTASE"/>
    <property type="match status" value="1"/>
</dbReference>
<dbReference type="PANTHER" id="PTHR43713:SF3">
    <property type="entry name" value="GLUTAMATE-1-SEMIALDEHYDE 2,1-AMINOMUTASE 1, CHLOROPLASTIC-RELATED"/>
    <property type="match status" value="1"/>
</dbReference>
<dbReference type="Pfam" id="PF00202">
    <property type="entry name" value="Aminotran_3"/>
    <property type="match status" value="1"/>
</dbReference>
<dbReference type="SUPFAM" id="SSF53383">
    <property type="entry name" value="PLP-dependent transferases"/>
    <property type="match status" value="1"/>
</dbReference>
<dbReference type="PROSITE" id="PS00600">
    <property type="entry name" value="AA_TRANSFER_CLASS_3"/>
    <property type="match status" value="1"/>
</dbReference>
<proteinExistence type="inferred from homology"/>